<gene>
    <name evidence="1" type="primary">rpsR</name>
    <name evidence="1" type="synonym">rps18</name>
    <name type="ordered locus">P9301_09911</name>
</gene>
<organism>
    <name type="scientific">Prochlorococcus marinus (strain MIT 9301)</name>
    <dbReference type="NCBI Taxonomy" id="167546"/>
    <lineage>
        <taxon>Bacteria</taxon>
        <taxon>Bacillati</taxon>
        <taxon>Cyanobacteriota</taxon>
        <taxon>Cyanophyceae</taxon>
        <taxon>Synechococcales</taxon>
        <taxon>Prochlorococcaceae</taxon>
        <taxon>Prochlorococcus</taxon>
    </lineage>
</organism>
<accession>A3PCY9</accession>
<keyword id="KW-1185">Reference proteome</keyword>
<keyword id="KW-0687">Ribonucleoprotein</keyword>
<keyword id="KW-0689">Ribosomal protein</keyword>
<keyword id="KW-0694">RNA-binding</keyword>
<keyword id="KW-0699">rRNA-binding</keyword>
<protein>
    <recommendedName>
        <fullName evidence="1">Small ribosomal subunit protein bS18</fullName>
    </recommendedName>
    <alternativeName>
        <fullName evidence="2">30S ribosomal protein S18</fullName>
    </alternativeName>
</protein>
<feature type="chain" id="PRO_1000003557" description="Small ribosomal subunit protein bS18">
    <location>
        <begin position="1"/>
        <end position="73"/>
    </location>
</feature>
<comment type="function">
    <text evidence="1">Binds as a heterodimer with protein bS6 to the central domain of the 16S rRNA, where it helps stabilize the platform of the 30S subunit.</text>
</comment>
<comment type="subunit">
    <text evidence="1">Part of the 30S ribosomal subunit. Forms a tight heterodimer with protein bS6.</text>
</comment>
<comment type="similarity">
    <text evidence="1">Belongs to the bacterial ribosomal protein bS18 family.</text>
</comment>
<name>RS18_PROM0</name>
<evidence type="ECO:0000255" key="1">
    <source>
        <dbReference type="HAMAP-Rule" id="MF_00270"/>
    </source>
</evidence>
<evidence type="ECO:0000305" key="2"/>
<sequence length="73" mass="8317">MPNSIFKKQLSPIKPGDPIDYKDVELLKKFITERGKILPRRMTGLTSKQQRDLTLAVKRARIVALLPFVNPEG</sequence>
<reference key="1">
    <citation type="journal article" date="2007" name="PLoS Genet.">
        <title>Patterns and implications of gene gain and loss in the evolution of Prochlorococcus.</title>
        <authorList>
            <person name="Kettler G.C."/>
            <person name="Martiny A.C."/>
            <person name="Huang K."/>
            <person name="Zucker J."/>
            <person name="Coleman M.L."/>
            <person name="Rodrigue S."/>
            <person name="Chen F."/>
            <person name="Lapidus A."/>
            <person name="Ferriera S."/>
            <person name="Johnson J."/>
            <person name="Steglich C."/>
            <person name="Church G.M."/>
            <person name="Richardson P."/>
            <person name="Chisholm S.W."/>
        </authorList>
    </citation>
    <scope>NUCLEOTIDE SEQUENCE [LARGE SCALE GENOMIC DNA]</scope>
    <source>
        <strain>MIT 9301</strain>
    </source>
</reference>
<proteinExistence type="inferred from homology"/>
<dbReference type="EMBL" id="CP000576">
    <property type="protein sequence ID" value="ABO17614.1"/>
    <property type="molecule type" value="Genomic_DNA"/>
</dbReference>
<dbReference type="RefSeq" id="WP_002806014.1">
    <property type="nucleotide sequence ID" value="NC_009091.1"/>
</dbReference>
<dbReference type="SMR" id="A3PCY9"/>
<dbReference type="STRING" id="167546.P9301_09911"/>
<dbReference type="GeneID" id="60201040"/>
<dbReference type="KEGG" id="pmg:P9301_09911"/>
<dbReference type="eggNOG" id="COG0238">
    <property type="taxonomic scope" value="Bacteria"/>
</dbReference>
<dbReference type="HOGENOM" id="CLU_148710_2_3_3"/>
<dbReference type="OrthoDB" id="9812008at2"/>
<dbReference type="Proteomes" id="UP000001430">
    <property type="component" value="Chromosome"/>
</dbReference>
<dbReference type="GO" id="GO:0022627">
    <property type="term" value="C:cytosolic small ribosomal subunit"/>
    <property type="evidence" value="ECO:0007669"/>
    <property type="project" value="TreeGrafter"/>
</dbReference>
<dbReference type="GO" id="GO:0070181">
    <property type="term" value="F:small ribosomal subunit rRNA binding"/>
    <property type="evidence" value="ECO:0007669"/>
    <property type="project" value="TreeGrafter"/>
</dbReference>
<dbReference type="GO" id="GO:0003735">
    <property type="term" value="F:structural constituent of ribosome"/>
    <property type="evidence" value="ECO:0007669"/>
    <property type="project" value="InterPro"/>
</dbReference>
<dbReference type="GO" id="GO:0006412">
    <property type="term" value="P:translation"/>
    <property type="evidence" value="ECO:0007669"/>
    <property type="project" value="UniProtKB-UniRule"/>
</dbReference>
<dbReference type="FunFam" id="4.10.640.10:FF:000002">
    <property type="entry name" value="30S ribosomal protein S18, chloroplastic"/>
    <property type="match status" value="1"/>
</dbReference>
<dbReference type="Gene3D" id="4.10.640.10">
    <property type="entry name" value="Ribosomal protein S18"/>
    <property type="match status" value="1"/>
</dbReference>
<dbReference type="HAMAP" id="MF_00270">
    <property type="entry name" value="Ribosomal_bS18"/>
    <property type="match status" value="1"/>
</dbReference>
<dbReference type="InterPro" id="IPR001648">
    <property type="entry name" value="Ribosomal_bS18"/>
</dbReference>
<dbReference type="InterPro" id="IPR018275">
    <property type="entry name" value="Ribosomal_bS18_CS"/>
</dbReference>
<dbReference type="InterPro" id="IPR036870">
    <property type="entry name" value="Ribosomal_bS18_sf"/>
</dbReference>
<dbReference type="NCBIfam" id="TIGR00165">
    <property type="entry name" value="S18"/>
    <property type="match status" value="1"/>
</dbReference>
<dbReference type="PANTHER" id="PTHR13479">
    <property type="entry name" value="30S RIBOSOMAL PROTEIN S18"/>
    <property type="match status" value="1"/>
</dbReference>
<dbReference type="PANTHER" id="PTHR13479:SF40">
    <property type="entry name" value="SMALL RIBOSOMAL SUBUNIT PROTEIN BS18M"/>
    <property type="match status" value="1"/>
</dbReference>
<dbReference type="Pfam" id="PF01084">
    <property type="entry name" value="Ribosomal_S18"/>
    <property type="match status" value="1"/>
</dbReference>
<dbReference type="PRINTS" id="PR00974">
    <property type="entry name" value="RIBOSOMALS18"/>
</dbReference>
<dbReference type="SUPFAM" id="SSF46911">
    <property type="entry name" value="Ribosomal protein S18"/>
    <property type="match status" value="1"/>
</dbReference>
<dbReference type="PROSITE" id="PS00057">
    <property type="entry name" value="RIBOSOMAL_S18"/>
    <property type="match status" value="1"/>
</dbReference>